<organism>
    <name type="scientific">Phoca fasciata</name>
    <name type="common">Ribbon seal</name>
    <dbReference type="NCBI Taxonomy" id="39088"/>
    <lineage>
        <taxon>Eukaryota</taxon>
        <taxon>Metazoa</taxon>
        <taxon>Chordata</taxon>
        <taxon>Craniata</taxon>
        <taxon>Vertebrata</taxon>
        <taxon>Euteleostomi</taxon>
        <taxon>Mammalia</taxon>
        <taxon>Eutheria</taxon>
        <taxon>Laurasiatheria</taxon>
        <taxon>Carnivora</taxon>
        <taxon>Caniformia</taxon>
        <taxon>Pinnipedia</taxon>
        <taxon>Phocidae</taxon>
        <taxon>Phocinae</taxon>
        <taxon>Phoca</taxon>
    </lineage>
</organism>
<evidence type="ECO:0000250" key="1">
    <source>
        <dbReference type="UniProtKB" id="P03901"/>
    </source>
</evidence>
<evidence type="ECO:0000250" key="2">
    <source>
        <dbReference type="UniProtKB" id="P03902"/>
    </source>
</evidence>
<evidence type="ECO:0000255" key="3"/>
<evidence type="ECO:0000305" key="4"/>
<keyword id="KW-0249">Electron transport</keyword>
<keyword id="KW-0472">Membrane</keyword>
<keyword id="KW-0496">Mitochondrion</keyword>
<keyword id="KW-0999">Mitochondrion inner membrane</keyword>
<keyword id="KW-0520">NAD</keyword>
<keyword id="KW-0679">Respiratory chain</keyword>
<keyword id="KW-1278">Translocase</keyword>
<keyword id="KW-0812">Transmembrane</keyword>
<keyword id="KW-1133">Transmembrane helix</keyword>
<keyword id="KW-0813">Transport</keyword>
<keyword id="KW-0830">Ubiquinone</keyword>
<comment type="function">
    <text evidence="1">Core subunit of the mitochondrial membrane respiratory chain NADH dehydrogenase (Complex I) which catalyzes electron transfer from NADH through the respiratory chain, using ubiquinone as an electron acceptor. Part of the enzyme membrane arm which is embedded in the lipid bilayer and involved in proton translocation.</text>
</comment>
<comment type="catalytic activity">
    <reaction evidence="1">
        <text>a ubiquinone + NADH + 5 H(+)(in) = a ubiquinol + NAD(+) + 4 H(+)(out)</text>
        <dbReference type="Rhea" id="RHEA:29091"/>
        <dbReference type="Rhea" id="RHEA-COMP:9565"/>
        <dbReference type="Rhea" id="RHEA-COMP:9566"/>
        <dbReference type="ChEBI" id="CHEBI:15378"/>
        <dbReference type="ChEBI" id="CHEBI:16389"/>
        <dbReference type="ChEBI" id="CHEBI:17976"/>
        <dbReference type="ChEBI" id="CHEBI:57540"/>
        <dbReference type="ChEBI" id="CHEBI:57945"/>
        <dbReference type="EC" id="7.1.1.2"/>
    </reaction>
    <physiologicalReaction direction="left-to-right" evidence="1">
        <dbReference type="Rhea" id="RHEA:29092"/>
    </physiologicalReaction>
</comment>
<comment type="subunit">
    <text evidence="2">Core subunit of respiratory chain NADH dehydrogenase (Complex I) which is composed of 45 different subunits.</text>
</comment>
<comment type="subcellular location">
    <subcellularLocation>
        <location evidence="2">Mitochondrion inner membrane</location>
        <topology evidence="3">Multi-pass membrane protein</topology>
    </subcellularLocation>
</comment>
<comment type="similarity">
    <text evidence="4">Belongs to the complex I subunit 4L family.</text>
</comment>
<sequence length="98" mass="10881">MSMVYANIFLAFIMSLMGLLMYRSHLMSSLLCLEGMMLSLFVMMTVTILNNHFTLANMAPIILLVFAACEAALGLSLLVMVSNTYGTDYVQNLNLLQC</sequence>
<geneLocation type="mitochondrion"/>
<feature type="chain" id="PRO_0000275092" description="NADH-ubiquinone oxidoreductase chain 4L">
    <location>
        <begin position="1"/>
        <end position="98"/>
    </location>
</feature>
<feature type="transmembrane region" description="Helical" evidence="3">
    <location>
        <begin position="1"/>
        <end position="21"/>
    </location>
</feature>
<feature type="transmembrane region" description="Helical" evidence="3">
    <location>
        <begin position="29"/>
        <end position="49"/>
    </location>
</feature>
<feature type="transmembrane region" description="Helical" evidence="3">
    <location>
        <begin position="61"/>
        <end position="81"/>
    </location>
</feature>
<proteinExistence type="inferred from homology"/>
<dbReference type="EC" id="7.1.1.2"/>
<dbReference type="EMBL" id="AM181029">
    <property type="protein sequence ID" value="CAJ57048.1"/>
    <property type="molecule type" value="Genomic_DNA"/>
</dbReference>
<dbReference type="RefSeq" id="YP_778859.1">
    <property type="nucleotide sequence ID" value="NC_008428.1"/>
</dbReference>
<dbReference type="SMR" id="Q08H50"/>
<dbReference type="GeneID" id="4356213"/>
<dbReference type="CTD" id="4539"/>
<dbReference type="GO" id="GO:0005743">
    <property type="term" value="C:mitochondrial inner membrane"/>
    <property type="evidence" value="ECO:0000250"/>
    <property type="project" value="UniProtKB"/>
</dbReference>
<dbReference type="GO" id="GO:0045271">
    <property type="term" value="C:respiratory chain complex I"/>
    <property type="evidence" value="ECO:0000250"/>
    <property type="project" value="UniProtKB"/>
</dbReference>
<dbReference type="GO" id="GO:0008137">
    <property type="term" value="F:NADH dehydrogenase (ubiquinone) activity"/>
    <property type="evidence" value="ECO:0000250"/>
    <property type="project" value="UniProtKB"/>
</dbReference>
<dbReference type="GO" id="GO:0042773">
    <property type="term" value="P:ATP synthesis coupled electron transport"/>
    <property type="evidence" value="ECO:0007669"/>
    <property type="project" value="InterPro"/>
</dbReference>
<dbReference type="FunFam" id="1.10.287.3510:FF:000002">
    <property type="entry name" value="NADH-ubiquinone oxidoreductase chain 4L"/>
    <property type="match status" value="1"/>
</dbReference>
<dbReference type="Gene3D" id="1.10.287.3510">
    <property type="match status" value="1"/>
</dbReference>
<dbReference type="InterPro" id="IPR001133">
    <property type="entry name" value="NADH_UbQ_OxRdtase_chain4L/K"/>
</dbReference>
<dbReference type="InterPro" id="IPR039428">
    <property type="entry name" value="NUOK/Mnh_C1-like"/>
</dbReference>
<dbReference type="PANTHER" id="PTHR11434:SF0">
    <property type="entry name" value="NADH-UBIQUINONE OXIDOREDUCTASE CHAIN 4L"/>
    <property type="match status" value="1"/>
</dbReference>
<dbReference type="PANTHER" id="PTHR11434">
    <property type="entry name" value="NADH-UBIQUINONE OXIDOREDUCTASE SUBUNIT ND4L"/>
    <property type="match status" value="1"/>
</dbReference>
<dbReference type="Pfam" id="PF00420">
    <property type="entry name" value="Oxidored_q2"/>
    <property type="match status" value="1"/>
</dbReference>
<accession>Q08H50</accession>
<name>NU4LM_PHOFA</name>
<protein>
    <recommendedName>
        <fullName>NADH-ubiquinone oxidoreductase chain 4L</fullName>
        <ecNumber>7.1.1.2</ecNumber>
    </recommendedName>
    <alternativeName>
        <fullName>NADH dehydrogenase subunit 4L</fullName>
    </alternativeName>
</protein>
<gene>
    <name type="primary">MT-ND4L</name>
    <name type="synonym">MTND4L</name>
    <name type="synonym">NADH4L</name>
    <name type="synonym">ND4L</name>
</gene>
<reference key="1">
    <citation type="journal article" date="2006" name="Mol. Phylogenet. Evol.">
        <title>Pinniped phylogeny and a new hypothesis for their origin and dispersal.</title>
        <authorList>
            <person name="Arnason U."/>
            <person name="Gullberg A."/>
            <person name="Janke A."/>
            <person name="Kullberg M."/>
            <person name="Lehman N."/>
            <person name="Petrov E.A."/>
            <person name="Vainola R."/>
        </authorList>
    </citation>
    <scope>NUCLEOTIDE SEQUENCE [GENOMIC DNA]</scope>
</reference>